<comment type="function">
    <text evidence="3">Cytochrome P450 monooxygenase; part of the cluster that mediates the biosynthesis of shearones, diterpenoid pyrones (DPs) which are structurally diverse meroterpenoids consisting of a diterpene linked by a pyrone, and which may exhibit a range of bioactivities (PubMed:35057611). Whitin the pathway, esdpH takes part in the molecular scaffold modification via the hydroxylation at C-6' and can transform shearone C into shearone E, shearone D into shearone F, and shearone H into shearone I, the latter being the final product of the pathway (PubMed:35057611). The molecular scaffold is commonly biosynthesized by a series of enzymes including the non-reducing polyketide synthase (NR-PKS) esdpA that generates an alpha-pyrone; the prenyltransferase esdpC that attaches a geranylgeranyl pyrophosphate (GGPP) produced by the GGPP synthase (GGPPS) esdpD onto the pyrone unit; the FAD-dependent monooxygenase esdpE that converts an olefin on the diterpene unit into an epoxide; and the terpene cyclase esdpB that catalyzes the cyclization reactions to give the molecular backbone shearone A (PubMed:35057611). In the modification steps, esdpF oxidizes the hydroxy group to a ketone at C-3 and esdpG then attaches hydroxy groups at both C-11 and C-12. After that, esdpI hydroxylates at C-20 and esdpH hydroxylates at C-6'. The ether bridge is generated by nucleophilic attack of the hydroxy group at C-20 to the carbonyl carbon at C-3. EsdpH can also functions prior to esdpI. The different combinations of these modification enzymes lead to the production of diverse shearone derivatives, shearone I being the end product of the pathway (PubMed:35057611). The alpha-ketoglutarate-dependent dioxygenase esdpJ seems not to be involved in this pathway (PubMed:35057611).</text>
</comment>
<comment type="cofactor">
    <cofactor evidence="1">
        <name>heme</name>
        <dbReference type="ChEBI" id="CHEBI:30413"/>
    </cofactor>
</comment>
<comment type="pathway">
    <text evidence="3">Secondary metabolite biosynthesis; terpenoid biosynthesis.</text>
</comment>
<comment type="subcellular location">
    <subcellularLocation>
        <location evidence="2">Membrane</location>
        <topology evidence="2">Single-pass membrane protein</topology>
    </subcellularLocation>
</comment>
<comment type="biotechnology">
    <text evidence="3">Shearone derivatives produced by this cluster are interesting candidates for Alzheimer's disease (AD) therapy since they moderately inhibit aggregation of amyloid beta 42 (Abeta42).</text>
</comment>
<comment type="similarity">
    <text evidence="5">Belongs to the cytochrome P450 family.</text>
</comment>
<evidence type="ECO:0000250" key="1">
    <source>
        <dbReference type="UniProtKB" id="P04798"/>
    </source>
</evidence>
<evidence type="ECO:0000255" key="2"/>
<evidence type="ECO:0000269" key="3">
    <source>
    </source>
</evidence>
<evidence type="ECO:0000303" key="4">
    <source>
    </source>
</evidence>
<evidence type="ECO:0000305" key="5"/>
<accession>A0A8D5RWG4</accession>
<feature type="chain" id="PRO_0000461040" description="Cytochrome P450 monooxygenase esdpH">
    <location>
        <begin position="1"/>
        <end position="501"/>
    </location>
</feature>
<feature type="transmembrane region" description="Helical" evidence="2">
    <location>
        <begin position="5"/>
        <end position="22"/>
    </location>
</feature>
<feature type="binding site" description="axial binding residue" evidence="1">
    <location>
        <position position="446"/>
    </location>
    <ligand>
        <name>heme</name>
        <dbReference type="ChEBI" id="CHEBI:30413"/>
    </ligand>
    <ligandPart>
        <name>Fe</name>
        <dbReference type="ChEBI" id="CHEBI:18248"/>
    </ligandPart>
</feature>
<proteinExistence type="evidence at protein level"/>
<dbReference type="EC" id="1.-.-.-" evidence="3"/>
<dbReference type="EMBL" id="LC600199">
    <property type="protein sequence ID" value="BCP96879.1"/>
    <property type="molecule type" value="Genomic_DNA"/>
</dbReference>
<dbReference type="SMR" id="A0A8D5RWG4"/>
<dbReference type="UniPathway" id="UPA00213"/>
<dbReference type="GO" id="GO:0016020">
    <property type="term" value="C:membrane"/>
    <property type="evidence" value="ECO:0007669"/>
    <property type="project" value="UniProtKB-SubCell"/>
</dbReference>
<dbReference type="GO" id="GO:0020037">
    <property type="term" value="F:heme binding"/>
    <property type="evidence" value="ECO:0007669"/>
    <property type="project" value="InterPro"/>
</dbReference>
<dbReference type="GO" id="GO:0005506">
    <property type="term" value="F:iron ion binding"/>
    <property type="evidence" value="ECO:0007669"/>
    <property type="project" value="InterPro"/>
</dbReference>
<dbReference type="GO" id="GO:0004497">
    <property type="term" value="F:monooxygenase activity"/>
    <property type="evidence" value="ECO:0007669"/>
    <property type="project" value="UniProtKB-KW"/>
</dbReference>
<dbReference type="GO" id="GO:0016705">
    <property type="term" value="F:oxidoreductase activity, acting on paired donors, with incorporation or reduction of molecular oxygen"/>
    <property type="evidence" value="ECO:0007669"/>
    <property type="project" value="InterPro"/>
</dbReference>
<dbReference type="GO" id="GO:0043386">
    <property type="term" value="P:mycotoxin biosynthetic process"/>
    <property type="evidence" value="ECO:0007669"/>
    <property type="project" value="UniProtKB-ARBA"/>
</dbReference>
<dbReference type="CDD" id="cd11060">
    <property type="entry name" value="CYP57A1-like"/>
    <property type="match status" value="1"/>
</dbReference>
<dbReference type="Gene3D" id="1.10.630.10">
    <property type="entry name" value="Cytochrome P450"/>
    <property type="match status" value="1"/>
</dbReference>
<dbReference type="InterPro" id="IPR001128">
    <property type="entry name" value="Cyt_P450"/>
</dbReference>
<dbReference type="InterPro" id="IPR017972">
    <property type="entry name" value="Cyt_P450_CS"/>
</dbReference>
<dbReference type="InterPro" id="IPR002403">
    <property type="entry name" value="Cyt_P450_E_grp-IV"/>
</dbReference>
<dbReference type="InterPro" id="IPR036396">
    <property type="entry name" value="Cyt_P450_sf"/>
</dbReference>
<dbReference type="InterPro" id="IPR050121">
    <property type="entry name" value="Cytochrome_P450_monoxygenase"/>
</dbReference>
<dbReference type="PANTHER" id="PTHR24305">
    <property type="entry name" value="CYTOCHROME P450"/>
    <property type="match status" value="1"/>
</dbReference>
<dbReference type="PANTHER" id="PTHR24305:SF175">
    <property type="entry name" value="CYTOCHROME P450 MONOOXYGENASE PKFB"/>
    <property type="match status" value="1"/>
</dbReference>
<dbReference type="Pfam" id="PF00067">
    <property type="entry name" value="p450"/>
    <property type="match status" value="1"/>
</dbReference>
<dbReference type="PRINTS" id="PR00465">
    <property type="entry name" value="EP450IV"/>
</dbReference>
<dbReference type="PRINTS" id="PR00385">
    <property type="entry name" value="P450"/>
</dbReference>
<dbReference type="SUPFAM" id="SSF48264">
    <property type="entry name" value="Cytochrome P450"/>
    <property type="match status" value="1"/>
</dbReference>
<dbReference type="PROSITE" id="PS00086">
    <property type="entry name" value="CYTOCHROME_P450"/>
    <property type="match status" value="1"/>
</dbReference>
<protein>
    <recommendedName>
        <fullName evidence="4">Cytochrome P450 monooxygenase esdpH</fullName>
        <ecNumber evidence="3">1.-.-.-</ecNumber>
    </recommendedName>
    <alternativeName>
        <fullName evidence="4">Shearone I biosynthesis cluster protein H</fullName>
    </alternativeName>
</protein>
<reference key="1">
    <citation type="journal article" date="2022" name="J. Nat. Prod.">
        <title>Synthetic biology-based discovery of diterpenoid pyrones from the genome of Eupenicillium shearii.</title>
        <authorList>
            <person name="Morishita Y."/>
            <person name="Tsukada K."/>
            <person name="Murakami K."/>
            <person name="Irie K."/>
            <person name="Asai T."/>
        </authorList>
    </citation>
    <scope>NUCLEOTIDE SEQUENCE [GENOMIC DNA]</scope>
    <scope>FUNCTION</scope>
    <scope>CATALYTIC ACTIVITY</scope>
    <scope>PATHWAY</scope>
    <scope>BIOTECHNOLOGY</scope>
    <source>
        <strain>IFM 42152</strain>
    </source>
</reference>
<gene>
    <name evidence="4" type="primary">esdpH</name>
</gene>
<organism>
    <name type="scientific">Penicillium shearii</name>
    <name type="common">Eupenicillium shearii</name>
    <dbReference type="NCBI Taxonomy" id="904690"/>
    <lineage>
        <taxon>Eukaryota</taxon>
        <taxon>Fungi</taxon>
        <taxon>Dikarya</taxon>
        <taxon>Ascomycota</taxon>
        <taxon>Pezizomycotina</taxon>
        <taxon>Eurotiomycetes</taxon>
        <taxon>Eurotiomycetidae</taxon>
        <taxon>Eurotiales</taxon>
        <taxon>Aspergillaceae</taxon>
        <taxon>Penicillium</taxon>
    </lineage>
</organism>
<name>ESDPH_PENSH</name>
<keyword id="KW-0349">Heme</keyword>
<keyword id="KW-0408">Iron</keyword>
<keyword id="KW-0472">Membrane</keyword>
<keyword id="KW-0479">Metal-binding</keyword>
<keyword id="KW-0503">Monooxygenase</keyword>
<keyword id="KW-0560">Oxidoreductase</keyword>
<keyword id="KW-0812">Transmembrane</keyword>
<keyword id="KW-1133">Transmembrane helix</keyword>
<sequence>MLSQRVGILIIGVLATATFWLCRRYFQLRGIPGPFVARITNLCRVRWVGSRKSHEIHSRLHDQYGSVVRFGPNMVSVADPAAISVIYPARSGFLKGDFYHVFKSPDEPPDVFTAQDEGIHKTLRAPVAPYYSFSKLQSLETAIDNNIDRLFHQLDRKDSGDSTSLTTWLQAFAFDTVWAWMFTNPYGMLEMGSTEEKKTLESNWEIFQIIGPLSQSSTLRNLAGIINAILTALKIDSIPQLHKHTVSLIKSREEQFESSSEELNASDNVDMMTQLLLMKSKNSMIPPWTVSSLSLLNVFAGSDSTAVVMGTMWHNLLLHRDSMQCLYNELLEHEAQGSLTRPVPKWKEVRGLAYLDACLNEALRLHPPFCLPFERVVPDTGLSIGDYYLPPGTLVGMSPYVVGRYKPVFGQDADQWRPERWLECSPQDQRKMESSMITFGAGRRVCLGKNVAIMEIKKLIPAILLRYDIKLLDPTSFKVENSWFFRQEGLDVEMKKRDGSA</sequence>